<accession>Q6NJD8</accession>
<keyword id="KW-1185">Reference proteome</keyword>
<keyword id="KW-0687">Ribonucleoprotein</keyword>
<keyword id="KW-0689">Ribosomal protein</keyword>
<keyword id="KW-0694">RNA-binding</keyword>
<keyword id="KW-0699">rRNA-binding</keyword>
<keyword id="KW-0820">tRNA-binding</keyword>
<proteinExistence type="inferred from homology"/>
<gene>
    <name evidence="1" type="primary">rpsL</name>
    <name type="ordered locus">DIP0467</name>
</gene>
<feature type="chain" id="PRO_0000146212" description="Small ribosomal subunit protein uS12">
    <location>
        <begin position="1"/>
        <end position="123"/>
    </location>
</feature>
<evidence type="ECO:0000255" key="1">
    <source>
        <dbReference type="HAMAP-Rule" id="MF_00403"/>
    </source>
</evidence>
<evidence type="ECO:0000305" key="2"/>
<reference key="1">
    <citation type="journal article" date="2003" name="Nucleic Acids Res.">
        <title>The complete genome sequence and analysis of Corynebacterium diphtheriae NCTC13129.</title>
        <authorList>
            <person name="Cerdeno-Tarraga A.-M."/>
            <person name="Efstratiou A."/>
            <person name="Dover L.G."/>
            <person name="Holden M.T.G."/>
            <person name="Pallen M.J."/>
            <person name="Bentley S.D."/>
            <person name="Besra G.S."/>
            <person name="Churcher C.M."/>
            <person name="James K.D."/>
            <person name="De Zoysa A."/>
            <person name="Chillingworth T."/>
            <person name="Cronin A."/>
            <person name="Dowd L."/>
            <person name="Feltwell T."/>
            <person name="Hamlin N."/>
            <person name="Holroyd S."/>
            <person name="Jagels K."/>
            <person name="Moule S."/>
            <person name="Quail M.A."/>
            <person name="Rabbinowitsch E."/>
            <person name="Rutherford K.M."/>
            <person name="Thomson N.R."/>
            <person name="Unwin L."/>
            <person name="Whitehead S."/>
            <person name="Barrell B.G."/>
            <person name="Parkhill J."/>
        </authorList>
    </citation>
    <scope>NUCLEOTIDE SEQUENCE [LARGE SCALE GENOMIC DNA]</scope>
    <source>
        <strain>ATCC 700971 / NCTC 13129 / Biotype gravis</strain>
    </source>
</reference>
<protein>
    <recommendedName>
        <fullName evidence="1">Small ribosomal subunit protein uS12</fullName>
    </recommendedName>
    <alternativeName>
        <fullName evidence="2">30S ribosomal protein S12</fullName>
    </alternativeName>
</protein>
<name>RS12_CORDI</name>
<organism>
    <name type="scientific">Corynebacterium diphtheriae (strain ATCC 700971 / NCTC 13129 / Biotype gravis)</name>
    <dbReference type="NCBI Taxonomy" id="257309"/>
    <lineage>
        <taxon>Bacteria</taxon>
        <taxon>Bacillati</taxon>
        <taxon>Actinomycetota</taxon>
        <taxon>Actinomycetes</taxon>
        <taxon>Mycobacteriales</taxon>
        <taxon>Corynebacteriaceae</taxon>
        <taxon>Corynebacterium</taxon>
    </lineage>
</organism>
<dbReference type="EMBL" id="BX248355">
    <property type="protein sequence ID" value="CAE48971.1"/>
    <property type="molecule type" value="Genomic_DNA"/>
</dbReference>
<dbReference type="RefSeq" id="WP_004566706.1">
    <property type="nucleotide sequence ID" value="NC_002935.2"/>
</dbReference>
<dbReference type="SMR" id="Q6NJD8"/>
<dbReference type="STRING" id="257309.DIP0467"/>
<dbReference type="GeneID" id="97331070"/>
<dbReference type="KEGG" id="cdi:DIP0467"/>
<dbReference type="HOGENOM" id="CLU_104295_1_2_11"/>
<dbReference type="Proteomes" id="UP000002198">
    <property type="component" value="Chromosome"/>
</dbReference>
<dbReference type="GO" id="GO:0015935">
    <property type="term" value="C:small ribosomal subunit"/>
    <property type="evidence" value="ECO:0007669"/>
    <property type="project" value="InterPro"/>
</dbReference>
<dbReference type="GO" id="GO:0019843">
    <property type="term" value="F:rRNA binding"/>
    <property type="evidence" value="ECO:0007669"/>
    <property type="project" value="UniProtKB-UniRule"/>
</dbReference>
<dbReference type="GO" id="GO:0003735">
    <property type="term" value="F:structural constituent of ribosome"/>
    <property type="evidence" value="ECO:0007669"/>
    <property type="project" value="InterPro"/>
</dbReference>
<dbReference type="GO" id="GO:0000049">
    <property type="term" value="F:tRNA binding"/>
    <property type="evidence" value="ECO:0007669"/>
    <property type="project" value="UniProtKB-UniRule"/>
</dbReference>
<dbReference type="GO" id="GO:0006412">
    <property type="term" value="P:translation"/>
    <property type="evidence" value="ECO:0007669"/>
    <property type="project" value="UniProtKB-UniRule"/>
</dbReference>
<dbReference type="CDD" id="cd03368">
    <property type="entry name" value="Ribosomal_S12"/>
    <property type="match status" value="1"/>
</dbReference>
<dbReference type="FunFam" id="2.40.50.140:FF:000001">
    <property type="entry name" value="30S ribosomal protein S12"/>
    <property type="match status" value="1"/>
</dbReference>
<dbReference type="Gene3D" id="2.40.50.140">
    <property type="entry name" value="Nucleic acid-binding proteins"/>
    <property type="match status" value="1"/>
</dbReference>
<dbReference type="HAMAP" id="MF_00403_B">
    <property type="entry name" value="Ribosomal_uS12_B"/>
    <property type="match status" value="1"/>
</dbReference>
<dbReference type="InterPro" id="IPR012340">
    <property type="entry name" value="NA-bd_OB-fold"/>
</dbReference>
<dbReference type="InterPro" id="IPR006032">
    <property type="entry name" value="Ribosomal_uS12"/>
</dbReference>
<dbReference type="InterPro" id="IPR005679">
    <property type="entry name" value="Ribosomal_uS12_bac"/>
</dbReference>
<dbReference type="NCBIfam" id="TIGR00981">
    <property type="entry name" value="rpsL_bact"/>
    <property type="match status" value="1"/>
</dbReference>
<dbReference type="PANTHER" id="PTHR11652">
    <property type="entry name" value="30S RIBOSOMAL PROTEIN S12 FAMILY MEMBER"/>
    <property type="match status" value="1"/>
</dbReference>
<dbReference type="Pfam" id="PF00164">
    <property type="entry name" value="Ribosom_S12_S23"/>
    <property type="match status" value="1"/>
</dbReference>
<dbReference type="PIRSF" id="PIRSF002133">
    <property type="entry name" value="Ribosomal_S12/S23"/>
    <property type="match status" value="1"/>
</dbReference>
<dbReference type="PRINTS" id="PR01034">
    <property type="entry name" value="RIBOSOMALS12"/>
</dbReference>
<dbReference type="SUPFAM" id="SSF50249">
    <property type="entry name" value="Nucleic acid-binding proteins"/>
    <property type="match status" value="1"/>
</dbReference>
<dbReference type="PROSITE" id="PS00055">
    <property type="entry name" value="RIBOSOMAL_S12"/>
    <property type="match status" value="1"/>
</dbReference>
<comment type="function">
    <text evidence="1">With S4 and S5 plays an important role in translational accuracy.</text>
</comment>
<comment type="function">
    <text evidence="1">Interacts with and stabilizes bases of the 16S rRNA that are involved in tRNA selection in the A site and with the mRNA backbone. Located at the interface of the 30S and 50S subunits, it traverses the body of the 30S subunit contacting proteins on the other side and probably holding the rRNA structure together. The combined cluster of proteins S8, S12 and S17 appears to hold together the shoulder and platform of the 30S subunit.</text>
</comment>
<comment type="subunit">
    <text evidence="1">Part of the 30S ribosomal subunit. Contacts proteins S8 and S17. May interact with IF1 in the 30S initiation complex.</text>
</comment>
<comment type="similarity">
    <text evidence="1">Belongs to the universal ribosomal protein uS12 family.</text>
</comment>
<comment type="caution">
    <text evidence="2">Because the enzyme that would modify Asp-89 to 3-methylthioaspartic acid has not been found in the proteome of this organism, that modification is not predicted.</text>
</comment>
<sequence>MPTIQQLVRKGRHDKTAKVATAALKGSPQRRGVCTRVYTTTPKKPNSALRKVARVRLTSGIEVSAYIPGEGHNLQEHSMVLVRGGRVKDLPGVRYKIIRGALDTQGVKDRKQARSRYGAKKEK</sequence>